<keyword id="KW-1185">Reference proteome</keyword>
<keyword id="KW-0833">Ubl conjugation pathway</keyword>
<comment type="function">
    <text evidence="1">E2-like enzyme which forms an intermediate with UFM1 via a thioester linkage.</text>
</comment>
<comment type="similarity">
    <text evidence="2">Belongs to the ubiquitin-conjugating enzyme family. UFC1 subfamily.</text>
</comment>
<evidence type="ECO:0000250" key="1"/>
<evidence type="ECO:0000305" key="2"/>
<organism>
    <name type="scientific">Drosophila grimshawi</name>
    <name type="common">Hawaiian fruit fly</name>
    <name type="synonym">Idiomyia grimshawi</name>
    <dbReference type="NCBI Taxonomy" id="7222"/>
    <lineage>
        <taxon>Eukaryota</taxon>
        <taxon>Metazoa</taxon>
        <taxon>Ecdysozoa</taxon>
        <taxon>Arthropoda</taxon>
        <taxon>Hexapoda</taxon>
        <taxon>Insecta</taxon>
        <taxon>Pterygota</taxon>
        <taxon>Neoptera</taxon>
        <taxon>Endopterygota</taxon>
        <taxon>Diptera</taxon>
        <taxon>Brachycera</taxon>
        <taxon>Muscomorpha</taxon>
        <taxon>Ephydroidea</taxon>
        <taxon>Drosophilidae</taxon>
        <taxon>Drosophila</taxon>
        <taxon>Hawaiian Drosophila</taxon>
    </lineage>
</organism>
<accession>B4J9W6</accession>
<sequence>MVDDSTRKTLSSIPLLQIRAGPREKDIWVQRLKEEYQALIKACTYVENNKQSGSDWFRLESNKEGTKWFGKCWYMHNLLKYEFDVEFDIPVTYPTTAPEIALPELDGKTAKMYRGGKICLTDHFKPLWARNVPKFGIAHAMALGLAPWLAVEVPDLIEKGVIAYKDNC</sequence>
<reference key="1">
    <citation type="journal article" date="2007" name="Nature">
        <title>Evolution of genes and genomes on the Drosophila phylogeny.</title>
        <authorList>
            <consortium name="Drosophila 12 genomes consortium"/>
        </authorList>
    </citation>
    <scope>NUCLEOTIDE SEQUENCE [LARGE SCALE GENOMIC DNA]</scope>
    <source>
        <strain>Tucson 15287-2541.00</strain>
    </source>
</reference>
<name>UFC1_DROGR</name>
<protein>
    <recommendedName>
        <fullName>Ubiquitin-fold modifier-conjugating enzyme 1</fullName>
    </recommendedName>
    <alternativeName>
        <fullName>Ufm1-conjugating enzyme 1</fullName>
    </alternativeName>
</protein>
<gene>
    <name type="ORF">GH19828</name>
</gene>
<proteinExistence type="inferred from homology"/>
<feature type="chain" id="PRO_0000391969" description="Ubiquitin-fold modifier-conjugating enzyme 1">
    <location>
        <begin position="1"/>
        <end position="168"/>
    </location>
</feature>
<feature type="active site" description="Glycyl thioester intermediate" evidence="1">
    <location>
        <position position="119"/>
    </location>
</feature>
<dbReference type="EMBL" id="CH916367">
    <property type="protein sequence ID" value="EDW02553.1"/>
    <property type="molecule type" value="Genomic_DNA"/>
</dbReference>
<dbReference type="RefSeq" id="XP_001987686.1">
    <property type="nucleotide sequence ID" value="XM_001987650.1"/>
</dbReference>
<dbReference type="SMR" id="B4J9W6"/>
<dbReference type="FunCoup" id="B4J9W6">
    <property type="interactions" value="1527"/>
</dbReference>
<dbReference type="STRING" id="7222.B4J9W6"/>
<dbReference type="eggNOG" id="KOG3357">
    <property type="taxonomic scope" value="Eukaryota"/>
</dbReference>
<dbReference type="HOGENOM" id="CLU_101170_0_0_1"/>
<dbReference type="InParanoid" id="B4J9W6"/>
<dbReference type="OMA" id="LWQKNVP"/>
<dbReference type="OrthoDB" id="10256182at2759"/>
<dbReference type="PhylomeDB" id="B4J9W6"/>
<dbReference type="Proteomes" id="UP000001070">
    <property type="component" value="Unassembled WGS sequence"/>
</dbReference>
<dbReference type="GO" id="GO:0005737">
    <property type="term" value="C:cytoplasm"/>
    <property type="evidence" value="ECO:0007669"/>
    <property type="project" value="TreeGrafter"/>
</dbReference>
<dbReference type="GO" id="GO:0061657">
    <property type="term" value="F:UFM1 conjugating enzyme activity"/>
    <property type="evidence" value="ECO:0007669"/>
    <property type="project" value="InterPro"/>
</dbReference>
<dbReference type="GO" id="GO:1990592">
    <property type="term" value="P:protein K69-linked ufmylation"/>
    <property type="evidence" value="ECO:0007669"/>
    <property type="project" value="TreeGrafter"/>
</dbReference>
<dbReference type="CDD" id="cd11686">
    <property type="entry name" value="UBCc_UFC1"/>
    <property type="match status" value="1"/>
</dbReference>
<dbReference type="FunFam" id="3.10.110.10:FF:000042">
    <property type="entry name" value="Ubiquitin-fold modifier-conjugating enzyme 1"/>
    <property type="match status" value="1"/>
</dbReference>
<dbReference type="Gene3D" id="3.10.110.10">
    <property type="entry name" value="Ubiquitin Conjugating Enzyme"/>
    <property type="match status" value="1"/>
</dbReference>
<dbReference type="InterPro" id="IPR016135">
    <property type="entry name" value="UBQ-conjugating_enzyme/RWD"/>
</dbReference>
<dbReference type="InterPro" id="IPR014806">
    <property type="entry name" value="Ufc1"/>
</dbReference>
<dbReference type="PANTHER" id="PTHR12921">
    <property type="entry name" value="UBIQUITIN-FOLD MODIFIER-CONJUGATING ENZYME 1"/>
    <property type="match status" value="1"/>
</dbReference>
<dbReference type="PANTHER" id="PTHR12921:SF0">
    <property type="entry name" value="UBIQUITIN-FOLD MODIFIER-CONJUGATING ENZYME 1"/>
    <property type="match status" value="1"/>
</dbReference>
<dbReference type="Pfam" id="PF08694">
    <property type="entry name" value="UFC1"/>
    <property type="match status" value="1"/>
</dbReference>
<dbReference type="PIRSF" id="PIRSF008716">
    <property type="entry name" value="DUF1782"/>
    <property type="match status" value="1"/>
</dbReference>
<dbReference type="SUPFAM" id="SSF54495">
    <property type="entry name" value="UBC-like"/>
    <property type="match status" value="1"/>
</dbReference>